<gene>
    <name evidence="1" type="primary">rnhB</name>
    <name type="ordered locus">P9515_16821</name>
</gene>
<accession>A2BYM8</accession>
<reference key="1">
    <citation type="journal article" date="2007" name="PLoS Genet.">
        <title>Patterns and implications of gene gain and loss in the evolution of Prochlorococcus.</title>
        <authorList>
            <person name="Kettler G.C."/>
            <person name="Martiny A.C."/>
            <person name="Huang K."/>
            <person name="Zucker J."/>
            <person name="Coleman M.L."/>
            <person name="Rodrigue S."/>
            <person name="Chen F."/>
            <person name="Lapidus A."/>
            <person name="Ferriera S."/>
            <person name="Johnson J."/>
            <person name="Steglich C."/>
            <person name="Church G.M."/>
            <person name="Richardson P."/>
            <person name="Chisholm S.W."/>
        </authorList>
    </citation>
    <scope>NUCLEOTIDE SEQUENCE [LARGE SCALE GENOMIC DNA]</scope>
    <source>
        <strain>MIT 9515</strain>
    </source>
</reference>
<dbReference type="EC" id="3.1.26.4" evidence="1"/>
<dbReference type="EMBL" id="CP000552">
    <property type="protein sequence ID" value="ABM72889.1"/>
    <property type="molecule type" value="Genomic_DNA"/>
</dbReference>
<dbReference type="RefSeq" id="WP_011820982.1">
    <property type="nucleotide sequence ID" value="NC_008817.1"/>
</dbReference>
<dbReference type="SMR" id="A2BYM8"/>
<dbReference type="STRING" id="167542.P9515_16821"/>
<dbReference type="GeneID" id="60201437"/>
<dbReference type="KEGG" id="pmc:P9515_16821"/>
<dbReference type="eggNOG" id="COG0164">
    <property type="taxonomic scope" value="Bacteria"/>
</dbReference>
<dbReference type="HOGENOM" id="CLU_036532_3_1_3"/>
<dbReference type="OrthoDB" id="9803420at2"/>
<dbReference type="Proteomes" id="UP000001589">
    <property type="component" value="Chromosome"/>
</dbReference>
<dbReference type="GO" id="GO:0005737">
    <property type="term" value="C:cytoplasm"/>
    <property type="evidence" value="ECO:0007669"/>
    <property type="project" value="UniProtKB-SubCell"/>
</dbReference>
<dbReference type="GO" id="GO:0032299">
    <property type="term" value="C:ribonuclease H2 complex"/>
    <property type="evidence" value="ECO:0007669"/>
    <property type="project" value="TreeGrafter"/>
</dbReference>
<dbReference type="GO" id="GO:0030145">
    <property type="term" value="F:manganese ion binding"/>
    <property type="evidence" value="ECO:0007669"/>
    <property type="project" value="UniProtKB-UniRule"/>
</dbReference>
<dbReference type="GO" id="GO:0003723">
    <property type="term" value="F:RNA binding"/>
    <property type="evidence" value="ECO:0007669"/>
    <property type="project" value="InterPro"/>
</dbReference>
<dbReference type="GO" id="GO:0004523">
    <property type="term" value="F:RNA-DNA hybrid ribonuclease activity"/>
    <property type="evidence" value="ECO:0007669"/>
    <property type="project" value="UniProtKB-UniRule"/>
</dbReference>
<dbReference type="GO" id="GO:0043137">
    <property type="term" value="P:DNA replication, removal of RNA primer"/>
    <property type="evidence" value="ECO:0007669"/>
    <property type="project" value="TreeGrafter"/>
</dbReference>
<dbReference type="GO" id="GO:0006298">
    <property type="term" value="P:mismatch repair"/>
    <property type="evidence" value="ECO:0007669"/>
    <property type="project" value="TreeGrafter"/>
</dbReference>
<dbReference type="CDD" id="cd07182">
    <property type="entry name" value="RNase_HII_bacteria_HII_like"/>
    <property type="match status" value="1"/>
</dbReference>
<dbReference type="Gene3D" id="3.30.420.10">
    <property type="entry name" value="Ribonuclease H-like superfamily/Ribonuclease H"/>
    <property type="match status" value="1"/>
</dbReference>
<dbReference type="HAMAP" id="MF_00052_B">
    <property type="entry name" value="RNase_HII_B"/>
    <property type="match status" value="1"/>
</dbReference>
<dbReference type="InterPro" id="IPR022898">
    <property type="entry name" value="RNase_HII"/>
</dbReference>
<dbReference type="InterPro" id="IPR001352">
    <property type="entry name" value="RNase_HII/HIII"/>
</dbReference>
<dbReference type="InterPro" id="IPR024567">
    <property type="entry name" value="RNase_HII/HIII_dom"/>
</dbReference>
<dbReference type="InterPro" id="IPR012337">
    <property type="entry name" value="RNaseH-like_sf"/>
</dbReference>
<dbReference type="InterPro" id="IPR036397">
    <property type="entry name" value="RNaseH_sf"/>
</dbReference>
<dbReference type="NCBIfam" id="NF000595">
    <property type="entry name" value="PRK00015.1-3"/>
    <property type="match status" value="1"/>
</dbReference>
<dbReference type="NCBIfam" id="NF010537">
    <property type="entry name" value="PRK13925.1"/>
    <property type="match status" value="1"/>
</dbReference>
<dbReference type="PANTHER" id="PTHR10954">
    <property type="entry name" value="RIBONUCLEASE H2 SUBUNIT A"/>
    <property type="match status" value="1"/>
</dbReference>
<dbReference type="PANTHER" id="PTHR10954:SF18">
    <property type="entry name" value="RIBONUCLEASE HII"/>
    <property type="match status" value="1"/>
</dbReference>
<dbReference type="Pfam" id="PF01351">
    <property type="entry name" value="RNase_HII"/>
    <property type="match status" value="1"/>
</dbReference>
<dbReference type="SUPFAM" id="SSF53098">
    <property type="entry name" value="Ribonuclease H-like"/>
    <property type="match status" value="1"/>
</dbReference>
<dbReference type="PROSITE" id="PS51975">
    <property type="entry name" value="RNASE_H_2"/>
    <property type="match status" value="1"/>
</dbReference>
<keyword id="KW-0963">Cytoplasm</keyword>
<keyword id="KW-0255">Endonuclease</keyword>
<keyword id="KW-0378">Hydrolase</keyword>
<keyword id="KW-0464">Manganese</keyword>
<keyword id="KW-0479">Metal-binding</keyword>
<keyword id="KW-0540">Nuclease</keyword>
<evidence type="ECO:0000255" key="1">
    <source>
        <dbReference type="HAMAP-Rule" id="MF_00052"/>
    </source>
</evidence>
<evidence type="ECO:0000255" key="2">
    <source>
        <dbReference type="PROSITE-ProRule" id="PRU01319"/>
    </source>
</evidence>
<comment type="function">
    <text evidence="1">Endonuclease that specifically degrades the RNA of RNA-DNA hybrids.</text>
</comment>
<comment type="catalytic activity">
    <reaction evidence="1">
        <text>Endonucleolytic cleavage to 5'-phosphomonoester.</text>
        <dbReference type="EC" id="3.1.26.4"/>
    </reaction>
</comment>
<comment type="cofactor">
    <cofactor evidence="1">
        <name>Mn(2+)</name>
        <dbReference type="ChEBI" id="CHEBI:29035"/>
    </cofactor>
    <cofactor evidence="1">
        <name>Mg(2+)</name>
        <dbReference type="ChEBI" id="CHEBI:18420"/>
    </cofactor>
    <text evidence="1">Manganese or magnesium. Binds 1 divalent metal ion per monomer in the absence of substrate. May bind a second metal ion after substrate binding.</text>
</comment>
<comment type="subcellular location">
    <subcellularLocation>
        <location evidence="1">Cytoplasm</location>
    </subcellularLocation>
</comment>
<comment type="similarity">
    <text evidence="1">Belongs to the RNase HII family.</text>
</comment>
<protein>
    <recommendedName>
        <fullName evidence="1">Ribonuclease HII</fullName>
        <shortName evidence="1">RNase HII</shortName>
        <ecNumber evidence="1">3.1.26.4</ecNumber>
    </recommendedName>
</protein>
<name>RNH2_PROM5</name>
<organism>
    <name type="scientific">Prochlorococcus marinus (strain MIT 9515)</name>
    <dbReference type="NCBI Taxonomy" id="167542"/>
    <lineage>
        <taxon>Bacteria</taxon>
        <taxon>Bacillati</taxon>
        <taxon>Cyanobacteriota</taxon>
        <taxon>Cyanophyceae</taxon>
        <taxon>Synechococcales</taxon>
        <taxon>Prochlorococcaceae</taxon>
        <taxon>Prochlorococcus</taxon>
    </lineage>
</organism>
<sequence length="209" mass="23450">MKLIIQDGKEEDHLQVLNKQLEIGIDEVGRGAVFGPVFSAAVVLTEKNGYTLKQLGVTDSKKLTEKKRKLLLPKIISLSSDYSLGQSSAREIDQLGIRYATELSMIRAIKKLKSKPYEVIIDGPLSLRLWKSHQRNIIAGDSKFTSIAAASIVAKVTRDFLMERLEKKFSGYFIFKNKGYGTKEHLLSLKANGVTNLHRKSFLTKLNLI</sequence>
<feature type="chain" id="PRO_1000031177" description="Ribonuclease HII">
    <location>
        <begin position="1"/>
        <end position="209"/>
    </location>
</feature>
<feature type="domain" description="RNase H type-2" evidence="2">
    <location>
        <begin position="20"/>
        <end position="209"/>
    </location>
</feature>
<feature type="binding site" evidence="1">
    <location>
        <position position="26"/>
    </location>
    <ligand>
        <name>a divalent metal cation</name>
        <dbReference type="ChEBI" id="CHEBI:60240"/>
    </ligand>
</feature>
<feature type="binding site" evidence="1">
    <location>
        <position position="27"/>
    </location>
    <ligand>
        <name>a divalent metal cation</name>
        <dbReference type="ChEBI" id="CHEBI:60240"/>
    </ligand>
</feature>
<feature type="binding site" evidence="1">
    <location>
        <position position="122"/>
    </location>
    <ligand>
        <name>a divalent metal cation</name>
        <dbReference type="ChEBI" id="CHEBI:60240"/>
    </ligand>
</feature>
<proteinExistence type="inferred from homology"/>